<dbReference type="EMBL" id="AL021633">
    <property type="protein sequence ID" value="CAA16545.1"/>
    <property type="status" value="ALT_SEQ"/>
    <property type="molecule type" value="Genomic_DNA"/>
</dbReference>
<dbReference type="EMBL" id="AL161579">
    <property type="protein sequence ID" value="CAB79860.1"/>
    <property type="status" value="ALT_SEQ"/>
    <property type="molecule type" value="Genomic_DNA"/>
</dbReference>
<dbReference type="EMBL" id="CP002687">
    <property type="protein sequence ID" value="AEE85908.1"/>
    <property type="molecule type" value="Genomic_DNA"/>
</dbReference>
<dbReference type="EMBL" id="AF370269">
    <property type="protein sequence ID" value="AAK44084.1"/>
    <property type="molecule type" value="mRNA"/>
</dbReference>
<dbReference type="EMBL" id="AY150375">
    <property type="protein sequence ID" value="AAN12920.1"/>
    <property type="molecule type" value="mRNA"/>
</dbReference>
<dbReference type="EMBL" id="AK220917">
    <property type="protein sequence ID" value="BAD94371.1"/>
    <property type="molecule type" value="mRNA"/>
</dbReference>
<dbReference type="PIR" id="T04509">
    <property type="entry name" value="T04509"/>
</dbReference>
<dbReference type="RefSeq" id="NP_567875.1">
    <molecule id="Q8H1G5-1"/>
    <property type="nucleotide sequence ID" value="NM_119291.5"/>
</dbReference>
<dbReference type="FunCoup" id="Q8H1G5">
    <property type="interactions" value="4313"/>
</dbReference>
<dbReference type="IntAct" id="Q8H1G5">
    <property type="interactions" value="3"/>
</dbReference>
<dbReference type="STRING" id="3702.Q8H1G5"/>
<dbReference type="iPTMnet" id="Q8H1G5"/>
<dbReference type="PaxDb" id="3702-AT4G31420.2"/>
<dbReference type="ProteomicsDB" id="234914">
    <molecule id="Q8H1G5-1"/>
</dbReference>
<dbReference type="EnsemblPlants" id="AT4G31420.1">
    <molecule id="Q8H1G5-1"/>
    <property type="protein sequence ID" value="AT4G31420.1"/>
    <property type="gene ID" value="AT4G31420"/>
</dbReference>
<dbReference type="GeneID" id="829269"/>
<dbReference type="Gramene" id="AT4G31420.1">
    <molecule id="Q8H1G5-1"/>
    <property type="protein sequence ID" value="AT4G31420.1"/>
    <property type="gene ID" value="AT4G31420"/>
</dbReference>
<dbReference type="KEGG" id="ath:AT4G31420"/>
<dbReference type="Araport" id="AT4G31420"/>
<dbReference type="TAIR" id="AT4G31420">
    <property type="gene designation" value="REIL1"/>
</dbReference>
<dbReference type="eggNOG" id="KOG2785">
    <property type="taxonomic scope" value="Eukaryota"/>
</dbReference>
<dbReference type="InParanoid" id="Q8H1G5"/>
<dbReference type="OMA" id="WTQTQQQ"/>
<dbReference type="OrthoDB" id="19329at2759"/>
<dbReference type="PhylomeDB" id="Q8H1G5"/>
<dbReference type="PRO" id="PR:Q8H1G5"/>
<dbReference type="Proteomes" id="UP000006548">
    <property type="component" value="Chromosome 4"/>
</dbReference>
<dbReference type="ExpressionAtlas" id="Q8H1G5">
    <property type="expression patterns" value="baseline and differential"/>
</dbReference>
<dbReference type="GO" id="GO:0005737">
    <property type="term" value="C:cytoplasm"/>
    <property type="evidence" value="ECO:0007669"/>
    <property type="project" value="UniProtKB-SubCell"/>
</dbReference>
<dbReference type="GO" id="GO:0003676">
    <property type="term" value="F:nucleic acid binding"/>
    <property type="evidence" value="ECO:0007669"/>
    <property type="project" value="InterPro"/>
</dbReference>
<dbReference type="GO" id="GO:0008270">
    <property type="term" value="F:zinc ion binding"/>
    <property type="evidence" value="ECO:0007669"/>
    <property type="project" value="UniProtKB-KW"/>
</dbReference>
<dbReference type="GO" id="GO:0042273">
    <property type="term" value="P:ribosomal large subunit biogenesis"/>
    <property type="evidence" value="ECO:0000314"/>
    <property type="project" value="UniProtKB"/>
</dbReference>
<dbReference type="InterPro" id="IPR003604">
    <property type="entry name" value="Matrin/U1-like-C_Znf_C2H2"/>
</dbReference>
<dbReference type="InterPro" id="IPR041661">
    <property type="entry name" value="ZN622/Rei1/Reh1_Znf-C2H2"/>
</dbReference>
<dbReference type="InterPro" id="IPR040025">
    <property type="entry name" value="Znf622/Rei1/Reh1"/>
</dbReference>
<dbReference type="InterPro" id="IPR036236">
    <property type="entry name" value="Znf_C2H2_sf"/>
</dbReference>
<dbReference type="InterPro" id="IPR013087">
    <property type="entry name" value="Znf_C2H2_type"/>
</dbReference>
<dbReference type="PANTHER" id="PTHR13182:SF8">
    <property type="entry name" value="CYTOPLASMIC 60S SUBUNIT BIOGENESIS FACTOR ZNF622"/>
    <property type="match status" value="1"/>
</dbReference>
<dbReference type="PANTHER" id="PTHR13182">
    <property type="entry name" value="ZINC FINGER PROTEIN 622"/>
    <property type="match status" value="1"/>
</dbReference>
<dbReference type="Pfam" id="PF12756">
    <property type="entry name" value="zf-C2H2_2"/>
    <property type="match status" value="1"/>
</dbReference>
<dbReference type="Pfam" id="PF12874">
    <property type="entry name" value="zf-met"/>
    <property type="match status" value="2"/>
</dbReference>
<dbReference type="SMART" id="SM00355">
    <property type="entry name" value="ZnF_C2H2"/>
    <property type="match status" value="4"/>
</dbReference>
<dbReference type="SMART" id="SM00451">
    <property type="entry name" value="ZnF_U1"/>
    <property type="match status" value="2"/>
</dbReference>
<dbReference type="SUPFAM" id="SSF57667">
    <property type="entry name" value="beta-beta-alpha zinc fingers"/>
    <property type="match status" value="3"/>
</dbReference>
<dbReference type="PROSITE" id="PS00028">
    <property type="entry name" value="ZINC_FINGER_C2H2_1"/>
    <property type="match status" value="2"/>
</dbReference>
<name>REIL1_ARATH</name>
<sequence>MPGLTCNACNMEFKDEEERNLHYKSDWHRYNLKRKVAGVPGVTEALFEARQSALAQEKNKSNEAPMLYTCAICAKGYRSSKAHEQHLQSRSHVLRVSQGTSINGEEDIAIIRQLPRRVQHRGSIDDDSEDEWVEVDSDEELAAEEASDSLSKLNVNESGSAEDMDDDGDADKYELDPTCCLMCDKKHKTLESCMLHMHKHHGFFIPDIEYLKDPEGLLTYLGLKVKRDFMCLYCNELCRPFSSLEAVRKHMEAKSHCKLHYGDGDDEEDAELEEFYDYSSSYVDEAGKQIVVSGETDNTVELVGGSELLITEKSENTTTSKTLGSREFMRYYRQKPRPTSQDSNQIIASLSSRYKSLGLKTVPSKEETLRMKVRKEMSKRGETMRTKIGVKSNVIRNLPNNVPY</sequence>
<proteinExistence type="evidence at protein level"/>
<keyword id="KW-0025">Alternative splicing</keyword>
<keyword id="KW-0963">Cytoplasm</keyword>
<keyword id="KW-0479">Metal-binding</keyword>
<keyword id="KW-1185">Reference proteome</keyword>
<keyword id="KW-0677">Repeat</keyword>
<keyword id="KW-0690">Ribosome biogenesis</keyword>
<keyword id="KW-0862">Zinc</keyword>
<keyword id="KW-0863">Zinc-finger</keyword>
<accession>Q8H1G5</accession>
<accession>O49591</accession>
<accession>Q56ZP6</accession>
<accession>Q94K64</accession>
<protein>
    <recommendedName>
        <fullName evidence="8">Cytoplasmic 60S subunit biogenesis factor REI1 homolog 1</fullName>
    </recommendedName>
    <alternativeName>
        <fullName evidence="7">Protein REI1-LIKE 1</fullName>
    </alternativeName>
    <alternativeName>
        <fullName evidence="8">pre-60S factor REI1 homolog 1</fullName>
    </alternativeName>
</protein>
<comment type="function">
    <text evidence="1 5">Pre-60S-associated factor involved in the cytoplasmic maturation of the 60S subunit. Involved in the dissociation and recycling of other late pre-60S factors before newly synthesized large ribosomal subunits enter translation (By similarity). Can complement the growth defect of a yeast mutant lacking REI1 (PubMed:24038679). Required for leaf growth under cold temperature conditions (PubMed:24038679).</text>
</comment>
<comment type="subunit">
    <text evidence="6">Can form homodimer. Interacts with RLP24, RPL24A, RPL24B, EBP1 and JJJ1.</text>
</comment>
<comment type="subcellular location">
    <subcellularLocation>
        <location evidence="1">Cytoplasm</location>
    </subcellularLocation>
</comment>
<comment type="alternative products">
    <event type="alternative splicing"/>
    <isoform>
        <id>Q8H1G5-1</id>
        <name>1</name>
        <sequence type="displayed"/>
    </isoform>
    <text evidence="8">A number of isoforms are produced. According to EST sequences.</text>
</comment>
<comment type="disruption phenotype">
    <text evidence="5">No visible phenotype under normal growth conditions. When grown at 10 degrees Celsius, the double mutant seedlings reil1-1 and reil2-1 show growth arrest at two cotyledon stage and die.</text>
</comment>
<comment type="similarity">
    <text evidence="8">Belongs to the REI1 family.</text>
</comment>
<comment type="sequence caution" evidence="8">
    <conflict type="erroneous gene model prediction">
        <sequence resource="EMBL-CDS" id="CAA16545"/>
    </conflict>
</comment>
<comment type="sequence caution" evidence="8">
    <conflict type="erroneous gene model prediction">
        <sequence resource="EMBL-CDS" id="CAB79860"/>
    </conflict>
</comment>
<organism>
    <name type="scientific">Arabidopsis thaliana</name>
    <name type="common">Mouse-ear cress</name>
    <dbReference type="NCBI Taxonomy" id="3702"/>
    <lineage>
        <taxon>Eukaryota</taxon>
        <taxon>Viridiplantae</taxon>
        <taxon>Streptophyta</taxon>
        <taxon>Embryophyta</taxon>
        <taxon>Tracheophyta</taxon>
        <taxon>Spermatophyta</taxon>
        <taxon>Magnoliopsida</taxon>
        <taxon>eudicotyledons</taxon>
        <taxon>Gunneridae</taxon>
        <taxon>Pentapetalae</taxon>
        <taxon>rosids</taxon>
        <taxon>malvids</taxon>
        <taxon>Brassicales</taxon>
        <taxon>Brassicaceae</taxon>
        <taxon>Camelineae</taxon>
        <taxon>Arabidopsis</taxon>
    </lineage>
</organism>
<gene>
    <name evidence="7" type="primary">REIL1</name>
    <name evidence="9" type="ordered locus">At4g31420</name>
</gene>
<feature type="chain" id="PRO_0000435443" description="Cytoplasmic 60S subunit biogenesis factor REI1 homolog 1">
    <location>
        <begin position="1"/>
        <end position="404"/>
    </location>
</feature>
<feature type="zinc finger region" description="C2H2-type 1" evidence="3">
    <location>
        <begin position="4"/>
        <end position="28"/>
    </location>
</feature>
<feature type="zinc finger region" description="C2H2-type 2" evidence="3">
    <location>
        <begin position="68"/>
        <end position="92"/>
    </location>
</feature>
<feature type="zinc finger region" description="C2H2-type 3" evidence="2">
    <location>
        <begin position="178"/>
        <end position="201"/>
    </location>
</feature>
<feature type="zinc finger region" description="C2H2-type 4" evidence="2">
    <location>
        <begin position="229"/>
        <end position="256"/>
    </location>
</feature>
<feature type="region of interest" description="Disordered" evidence="4">
    <location>
        <begin position="119"/>
        <end position="169"/>
    </location>
</feature>
<feature type="compositionally biased region" description="Acidic residues" evidence="4">
    <location>
        <begin position="125"/>
        <end position="147"/>
    </location>
</feature>
<feature type="compositionally biased region" description="Acidic residues" evidence="4">
    <location>
        <begin position="160"/>
        <end position="169"/>
    </location>
</feature>
<feature type="sequence conflict" description="In Ref. 3; AAK44084." evidence="8" ref="3">
    <original>E</original>
    <variation>G</variation>
    <location>
        <position position="48"/>
    </location>
</feature>
<reference key="1">
    <citation type="journal article" date="1999" name="Nature">
        <title>Sequence and analysis of chromosome 4 of the plant Arabidopsis thaliana.</title>
        <authorList>
            <person name="Mayer K.F.X."/>
            <person name="Schueller C."/>
            <person name="Wambutt R."/>
            <person name="Murphy G."/>
            <person name="Volckaert G."/>
            <person name="Pohl T."/>
            <person name="Duesterhoeft A."/>
            <person name="Stiekema W."/>
            <person name="Entian K.-D."/>
            <person name="Terryn N."/>
            <person name="Harris B."/>
            <person name="Ansorge W."/>
            <person name="Brandt P."/>
            <person name="Grivell L.A."/>
            <person name="Rieger M."/>
            <person name="Weichselgartner M."/>
            <person name="de Simone V."/>
            <person name="Obermaier B."/>
            <person name="Mache R."/>
            <person name="Mueller M."/>
            <person name="Kreis M."/>
            <person name="Delseny M."/>
            <person name="Puigdomenech P."/>
            <person name="Watson M."/>
            <person name="Schmidtheini T."/>
            <person name="Reichert B."/>
            <person name="Portetelle D."/>
            <person name="Perez-Alonso M."/>
            <person name="Boutry M."/>
            <person name="Bancroft I."/>
            <person name="Vos P."/>
            <person name="Hoheisel J."/>
            <person name="Zimmermann W."/>
            <person name="Wedler H."/>
            <person name="Ridley P."/>
            <person name="Langham S.-A."/>
            <person name="McCullagh B."/>
            <person name="Bilham L."/>
            <person name="Robben J."/>
            <person name="van der Schueren J."/>
            <person name="Grymonprez B."/>
            <person name="Chuang Y.-J."/>
            <person name="Vandenbussche F."/>
            <person name="Braeken M."/>
            <person name="Weltjens I."/>
            <person name="Voet M."/>
            <person name="Bastiaens I."/>
            <person name="Aert R."/>
            <person name="Defoor E."/>
            <person name="Weitzenegger T."/>
            <person name="Bothe G."/>
            <person name="Ramsperger U."/>
            <person name="Hilbert H."/>
            <person name="Braun M."/>
            <person name="Holzer E."/>
            <person name="Brandt A."/>
            <person name="Peters S."/>
            <person name="van Staveren M."/>
            <person name="Dirkse W."/>
            <person name="Mooijman P."/>
            <person name="Klein Lankhorst R."/>
            <person name="Rose M."/>
            <person name="Hauf J."/>
            <person name="Koetter P."/>
            <person name="Berneiser S."/>
            <person name="Hempel S."/>
            <person name="Feldpausch M."/>
            <person name="Lamberth S."/>
            <person name="Van den Daele H."/>
            <person name="De Keyser A."/>
            <person name="Buysshaert C."/>
            <person name="Gielen J."/>
            <person name="Villarroel R."/>
            <person name="De Clercq R."/>
            <person name="van Montagu M."/>
            <person name="Rogers J."/>
            <person name="Cronin A."/>
            <person name="Quail M.A."/>
            <person name="Bray-Allen S."/>
            <person name="Clark L."/>
            <person name="Doggett J."/>
            <person name="Hall S."/>
            <person name="Kay M."/>
            <person name="Lennard N."/>
            <person name="McLay K."/>
            <person name="Mayes R."/>
            <person name="Pettett A."/>
            <person name="Rajandream M.A."/>
            <person name="Lyne M."/>
            <person name="Benes V."/>
            <person name="Rechmann S."/>
            <person name="Borkova D."/>
            <person name="Bloecker H."/>
            <person name="Scharfe M."/>
            <person name="Grimm M."/>
            <person name="Loehnert T.-H."/>
            <person name="Dose S."/>
            <person name="de Haan M."/>
            <person name="Maarse A.C."/>
            <person name="Schaefer M."/>
            <person name="Mueller-Auer S."/>
            <person name="Gabel C."/>
            <person name="Fuchs M."/>
            <person name="Fartmann B."/>
            <person name="Granderath K."/>
            <person name="Dauner D."/>
            <person name="Herzl A."/>
            <person name="Neumann S."/>
            <person name="Argiriou A."/>
            <person name="Vitale D."/>
            <person name="Liguori R."/>
            <person name="Piravandi E."/>
            <person name="Massenet O."/>
            <person name="Quigley F."/>
            <person name="Clabauld G."/>
            <person name="Muendlein A."/>
            <person name="Felber R."/>
            <person name="Schnabl S."/>
            <person name="Hiller R."/>
            <person name="Schmidt W."/>
            <person name="Lecharny A."/>
            <person name="Aubourg S."/>
            <person name="Chefdor F."/>
            <person name="Cooke R."/>
            <person name="Berger C."/>
            <person name="Monfort A."/>
            <person name="Casacuberta E."/>
            <person name="Gibbons T."/>
            <person name="Weber N."/>
            <person name="Vandenbol M."/>
            <person name="Bargues M."/>
            <person name="Terol J."/>
            <person name="Torres A."/>
            <person name="Perez-Perez A."/>
            <person name="Purnelle B."/>
            <person name="Bent E."/>
            <person name="Johnson S."/>
            <person name="Tacon D."/>
            <person name="Jesse T."/>
            <person name="Heijnen L."/>
            <person name="Schwarz S."/>
            <person name="Scholler P."/>
            <person name="Heber S."/>
            <person name="Francs P."/>
            <person name="Bielke C."/>
            <person name="Frishman D."/>
            <person name="Haase D."/>
            <person name="Lemcke K."/>
            <person name="Mewes H.-W."/>
            <person name="Stocker S."/>
            <person name="Zaccaria P."/>
            <person name="Bevan M."/>
            <person name="Wilson R.K."/>
            <person name="de la Bastide M."/>
            <person name="Habermann K."/>
            <person name="Parnell L."/>
            <person name="Dedhia N."/>
            <person name="Gnoj L."/>
            <person name="Schutz K."/>
            <person name="Huang E."/>
            <person name="Spiegel L."/>
            <person name="Sekhon M."/>
            <person name="Murray J."/>
            <person name="Sheet P."/>
            <person name="Cordes M."/>
            <person name="Abu-Threideh J."/>
            <person name="Stoneking T."/>
            <person name="Kalicki J."/>
            <person name="Graves T."/>
            <person name="Harmon G."/>
            <person name="Edwards J."/>
            <person name="Latreille P."/>
            <person name="Courtney L."/>
            <person name="Cloud J."/>
            <person name="Abbott A."/>
            <person name="Scott K."/>
            <person name="Johnson D."/>
            <person name="Minx P."/>
            <person name="Bentley D."/>
            <person name="Fulton B."/>
            <person name="Miller N."/>
            <person name="Greco T."/>
            <person name="Kemp K."/>
            <person name="Kramer J."/>
            <person name="Fulton L."/>
            <person name="Mardis E."/>
            <person name="Dante M."/>
            <person name="Pepin K."/>
            <person name="Hillier L.W."/>
            <person name="Nelson J."/>
            <person name="Spieth J."/>
            <person name="Ryan E."/>
            <person name="Andrews S."/>
            <person name="Geisel C."/>
            <person name="Layman D."/>
            <person name="Du H."/>
            <person name="Ali J."/>
            <person name="Berghoff A."/>
            <person name="Jones K."/>
            <person name="Drone K."/>
            <person name="Cotton M."/>
            <person name="Joshu C."/>
            <person name="Antonoiu B."/>
            <person name="Zidanic M."/>
            <person name="Strong C."/>
            <person name="Sun H."/>
            <person name="Lamar B."/>
            <person name="Yordan C."/>
            <person name="Ma P."/>
            <person name="Zhong J."/>
            <person name="Preston R."/>
            <person name="Vil D."/>
            <person name="Shekher M."/>
            <person name="Matero A."/>
            <person name="Shah R."/>
            <person name="Swaby I.K."/>
            <person name="O'Shaughnessy A."/>
            <person name="Rodriguez M."/>
            <person name="Hoffman J."/>
            <person name="Till S."/>
            <person name="Granat S."/>
            <person name="Shohdy N."/>
            <person name="Hasegawa A."/>
            <person name="Hameed A."/>
            <person name="Lodhi M."/>
            <person name="Johnson A."/>
            <person name="Chen E."/>
            <person name="Marra M.A."/>
            <person name="Martienssen R."/>
            <person name="McCombie W.R."/>
        </authorList>
    </citation>
    <scope>NUCLEOTIDE SEQUENCE [LARGE SCALE GENOMIC DNA]</scope>
    <source>
        <strain>cv. Columbia</strain>
    </source>
</reference>
<reference key="2">
    <citation type="journal article" date="2017" name="Plant J.">
        <title>Araport11: a complete reannotation of the Arabidopsis thaliana reference genome.</title>
        <authorList>
            <person name="Cheng C.Y."/>
            <person name="Krishnakumar V."/>
            <person name="Chan A.P."/>
            <person name="Thibaud-Nissen F."/>
            <person name="Schobel S."/>
            <person name="Town C.D."/>
        </authorList>
    </citation>
    <scope>GENOME REANNOTATION</scope>
    <source>
        <strain>cv. Columbia</strain>
    </source>
</reference>
<reference key="3">
    <citation type="journal article" date="2003" name="Science">
        <title>Empirical analysis of transcriptional activity in the Arabidopsis genome.</title>
        <authorList>
            <person name="Yamada K."/>
            <person name="Lim J."/>
            <person name="Dale J.M."/>
            <person name="Chen H."/>
            <person name="Shinn P."/>
            <person name="Palm C.J."/>
            <person name="Southwick A.M."/>
            <person name="Wu H.C."/>
            <person name="Kim C.J."/>
            <person name="Nguyen M."/>
            <person name="Pham P.K."/>
            <person name="Cheuk R.F."/>
            <person name="Karlin-Newmann G."/>
            <person name="Liu S.X."/>
            <person name="Lam B."/>
            <person name="Sakano H."/>
            <person name="Wu T."/>
            <person name="Yu G."/>
            <person name="Miranda M."/>
            <person name="Quach H.L."/>
            <person name="Tripp M."/>
            <person name="Chang C.H."/>
            <person name="Lee J.M."/>
            <person name="Toriumi M.J."/>
            <person name="Chan M.M."/>
            <person name="Tang C.C."/>
            <person name="Onodera C.S."/>
            <person name="Deng J.M."/>
            <person name="Akiyama K."/>
            <person name="Ansari Y."/>
            <person name="Arakawa T."/>
            <person name="Banh J."/>
            <person name="Banno F."/>
            <person name="Bowser L."/>
            <person name="Brooks S.Y."/>
            <person name="Carninci P."/>
            <person name="Chao Q."/>
            <person name="Choy N."/>
            <person name="Enju A."/>
            <person name="Goldsmith A.D."/>
            <person name="Gurjal M."/>
            <person name="Hansen N.F."/>
            <person name="Hayashizaki Y."/>
            <person name="Johnson-Hopson C."/>
            <person name="Hsuan V.W."/>
            <person name="Iida K."/>
            <person name="Karnes M."/>
            <person name="Khan S."/>
            <person name="Koesema E."/>
            <person name="Ishida J."/>
            <person name="Jiang P.X."/>
            <person name="Jones T."/>
            <person name="Kawai J."/>
            <person name="Kamiya A."/>
            <person name="Meyers C."/>
            <person name="Nakajima M."/>
            <person name="Narusaka M."/>
            <person name="Seki M."/>
            <person name="Sakurai T."/>
            <person name="Satou M."/>
            <person name="Tamse R."/>
            <person name="Vaysberg M."/>
            <person name="Wallender E.K."/>
            <person name="Wong C."/>
            <person name="Yamamura Y."/>
            <person name="Yuan S."/>
            <person name="Shinozaki K."/>
            <person name="Davis R.W."/>
            <person name="Theologis A."/>
            <person name="Ecker J.R."/>
        </authorList>
    </citation>
    <scope>NUCLEOTIDE SEQUENCE [LARGE SCALE MRNA]</scope>
    <source>
        <strain>cv. Columbia</strain>
    </source>
</reference>
<reference key="4">
    <citation type="submission" date="2005-03" db="EMBL/GenBank/DDBJ databases">
        <title>Large-scale analysis of RIKEN Arabidopsis full-length (RAFL) cDNAs.</title>
        <authorList>
            <person name="Totoki Y."/>
            <person name="Seki M."/>
            <person name="Ishida J."/>
            <person name="Nakajima M."/>
            <person name="Enju A."/>
            <person name="Kamiya A."/>
            <person name="Narusaka M."/>
            <person name="Shin-i T."/>
            <person name="Nakagawa M."/>
            <person name="Sakamoto N."/>
            <person name="Oishi K."/>
            <person name="Kohara Y."/>
            <person name="Kobayashi M."/>
            <person name="Toyoda A."/>
            <person name="Sakaki Y."/>
            <person name="Sakurai T."/>
            <person name="Iida K."/>
            <person name="Akiyama K."/>
            <person name="Satou M."/>
            <person name="Toyoda T."/>
            <person name="Konagaya A."/>
            <person name="Carninci P."/>
            <person name="Kawai J."/>
            <person name="Hayashizaki Y."/>
            <person name="Shinozaki K."/>
        </authorList>
    </citation>
    <scope>NUCLEOTIDE SEQUENCE [LARGE SCALE MRNA] OF 251-404</scope>
    <source>
        <strain>cv. Columbia</strain>
    </source>
</reference>
<reference key="5">
    <citation type="journal article" date="2013" name="Plant Physiol.">
        <title>The REIL1 and REIL2 proteins of Arabidopsis thaliana are required for leaf growth in the cold.</title>
        <authorList>
            <person name="Schmidt S."/>
            <person name="Dethloff F."/>
            <person name="Beine-Golovchuk O."/>
            <person name="Kopka J."/>
        </authorList>
    </citation>
    <scope>FUNCTION</scope>
    <scope>DISRUPTION PHENOTYPE</scope>
</reference>
<reference key="6">
    <citation type="journal article" date="2014" name="Plant Signal. Behav.">
        <title>REIL proteins of Arabidopsis thaliana interact in yeast-2-hybrid assays with homologs of the yeast Rlp24, Rpl24A, Rlp24B, Arx1, and Jjj1 proteins.</title>
        <authorList>
            <person name="Schmidt S."/>
            <person name="Dethloff F."/>
            <person name="Beine-Golovchuk O."/>
            <person name="Kopka J."/>
        </authorList>
    </citation>
    <scope>SUBUNIT</scope>
    <scope>INTERACTION WITH RLP24; RPL24A; RPL24B; EBP1 AND JJJ1</scope>
</reference>
<evidence type="ECO:0000250" key="1">
    <source>
        <dbReference type="UniProtKB" id="P38344"/>
    </source>
</evidence>
<evidence type="ECO:0000255" key="2"/>
<evidence type="ECO:0000255" key="3">
    <source>
        <dbReference type="PROSITE-ProRule" id="PRU00042"/>
    </source>
</evidence>
<evidence type="ECO:0000256" key="4">
    <source>
        <dbReference type="SAM" id="MobiDB-lite"/>
    </source>
</evidence>
<evidence type="ECO:0000269" key="5">
    <source>
    </source>
</evidence>
<evidence type="ECO:0000269" key="6">
    <source>
    </source>
</evidence>
<evidence type="ECO:0000303" key="7">
    <source>
    </source>
</evidence>
<evidence type="ECO:0000305" key="8"/>
<evidence type="ECO:0000312" key="9">
    <source>
        <dbReference type="Araport" id="AT4G31420"/>
    </source>
</evidence>